<keyword id="KW-0025">Alternative splicing</keyword>
<keyword id="KW-1015">Disulfide bond</keyword>
<keyword id="KW-0325">Glycoprotein</keyword>
<keyword id="KW-0328">Glycosyltransferase</keyword>
<keyword id="KW-0333">Golgi apparatus</keyword>
<keyword id="KW-0472">Membrane</keyword>
<keyword id="KW-1267">Proteomics identification</keyword>
<keyword id="KW-1185">Reference proteome</keyword>
<keyword id="KW-0735">Signal-anchor</keyword>
<keyword id="KW-0808">Transferase</keyword>
<keyword id="KW-0812">Transmembrane</keyword>
<keyword id="KW-1133">Transmembrane helix</keyword>
<gene>
    <name type="primary">ST6GAL2</name>
    <name type="synonym">KIAA1877</name>
    <name type="synonym">SIAT2</name>
</gene>
<dbReference type="EC" id="2.4.3.1" evidence="3 4 5"/>
<dbReference type="EMBL" id="AB059555">
    <property type="protein sequence ID" value="BAC24793.1"/>
    <property type="molecule type" value="mRNA"/>
</dbReference>
<dbReference type="EMBL" id="AB058780">
    <property type="protein sequence ID" value="BAB47506.1"/>
    <property type="status" value="ALT_INIT"/>
    <property type="molecule type" value="mRNA"/>
</dbReference>
<dbReference type="EMBL" id="AC016994">
    <property type="status" value="NOT_ANNOTATED_CDS"/>
    <property type="molecule type" value="Genomic_DNA"/>
</dbReference>
<dbReference type="EMBL" id="AC108049">
    <property type="protein sequence ID" value="AAY15022.1"/>
    <property type="molecule type" value="Genomic_DNA"/>
</dbReference>
<dbReference type="EMBL" id="CH471127">
    <property type="protein sequence ID" value="EAX01742.1"/>
    <property type="molecule type" value="Genomic_DNA"/>
</dbReference>
<dbReference type="EMBL" id="CH471127">
    <property type="protein sequence ID" value="EAX01743.1"/>
    <property type="molecule type" value="Genomic_DNA"/>
</dbReference>
<dbReference type="EMBL" id="BC008680">
    <property type="protein sequence ID" value="AAH08680.1"/>
    <property type="status" value="ALT_INIT"/>
    <property type="molecule type" value="mRNA"/>
</dbReference>
<dbReference type="EMBL" id="AJ512141">
    <property type="protein sequence ID" value="CAD54408.1"/>
    <property type="molecule type" value="mRNA"/>
</dbReference>
<dbReference type="CCDS" id="CCDS2073.1">
    <molecule id="Q96JF0-1"/>
</dbReference>
<dbReference type="CCDS" id="CCDS46380.1">
    <molecule id="Q96JF0-2"/>
</dbReference>
<dbReference type="RefSeq" id="NP_001135823.1">
    <molecule id="Q96JF0-1"/>
    <property type="nucleotide sequence ID" value="NM_001142351.2"/>
</dbReference>
<dbReference type="RefSeq" id="NP_001135824.1">
    <molecule id="Q96JF0-2"/>
    <property type="nucleotide sequence ID" value="NM_001142352.2"/>
</dbReference>
<dbReference type="RefSeq" id="NP_001309291.1">
    <molecule id="Q96JF0-1"/>
    <property type="nucleotide sequence ID" value="NM_001322362.2"/>
</dbReference>
<dbReference type="RefSeq" id="NP_115917.1">
    <molecule id="Q96JF0-1"/>
    <property type="nucleotide sequence ID" value="NM_032528.3"/>
</dbReference>
<dbReference type="RefSeq" id="XP_006712865.1">
    <molecule id="Q96JF0-1"/>
    <property type="nucleotide sequence ID" value="XM_006712802.2"/>
</dbReference>
<dbReference type="RefSeq" id="XP_011510301.1">
    <molecule id="Q96JF0-1"/>
    <property type="nucleotide sequence ID" value="XM_011511999.3"/>
</dbReference>
<dbReference type="RefSeq" id="XP_011510303.1">
    <molecule id="Q96JF0-2"/>
    <property type="nucleotide sequence ID" value="XM_011512001.3"/>
</dbReference>
<dbReference type="RefSeq" id="XP_047301982.1">
    <molecule id="Q96JF0-1"/>
    <property type="nucleotide sequence ID" value="XM_047446026.1"/>
</dbReference>
<dbReference type="RefSeq" id="XP_047301983.1">
    <molecule id="Q96JF0-1"/>
    <property type="nucleotide sequence ID" value="XM_047446027.1"/>
</dbReference>
<dbReference type="RefSeq" id="XP_054200180.1">
    <molecule id="Q96JF0-1"/>
    <property type="nucleotide sequence ID" value="XM_054344205.1"/>
</dbReference>
<dbReference type="RefSeq" id="XP_054200181.1">
    <molecule id="Q96JF0-1"/>
    <property type="nucleotide sequence ID" value="XM_054344206.1"/>
</dbReference>
<dbReference type="RefSeq" id="XP_054200182.1">
    <molecule id="Q96JF0-1"/>
    <property type="nucleotide sequence ID" value="XM_054344207.1"/>
</dbReference>
<dbReference type="RefSeq" id="XP_054200184.1">
    <molecule id="Q96JF0-2"/>
    <property type="nucleotide sequence ID" value="XM_054344209.1"/>
</dbReference>
<dbReference type="SMR" id="Q96JF0"/>
<dbReference type="BioGRID" id="124151">
    <property type="interactions" value="17"/>
</dbReference>
<dbReference type="FunCoup" id="Q96JF0">
    <property type="interactions" value="624"/>
</dbReference>
<dbReference type="IntAct" id="Q96JF0">
    <property type="interactions" value="15"/>
</dbReference>
<dbReference type="STRING" id="9606.ENSP00000386942"/>
<dbReference type="CAZy" id="GT29">
    <property type="family name" value="Glycosyltransferase Family 29"/>
</dbReference>
<dbReference type="GlyCosmos" id="Q96JF0">
    <property type="glycosylation" value="3 sites, 1 glycan"/>
</dbReference>
<dbReference type="GlyGen" id="Q96JF0">
    <property type="glycosylation" value="8 sites, 2 O-linked glycans (5 sites)"/>
</dbReference>
<dbReference type="iPTMnet" id="Q96JF0"/>
<dbReference type="PhosphoSitePlus" id="Q96JF0"/>
<dbReference type="BioMuta" id="ST6GAL2"/>
<dbReference type="DMDM" id="166219772"/>
<dbReference type="jPOST" id="Q96JF0"/>
<dbReference type="MassIVE" id="Q96JF0"/>
<dbReference type="PaxDb" id="9606-ENSP00000386942"/>
<dbReference type="PeptideAtlas" id="Q96JF0"/>
<dbReference type="Antibodypedia" id="2496">
    <property type="antibodies" value="84 antibodies from 17 providers"/>
</dbReference>
<dbReference type="DNASU" id="84620"/>
<dbReference type="Ensembl" id="ENST00000361686.8">
    <molecule id="Q96JF0-1"/>
    <property type="protein sequence ID" value="ENSP00000355273.4"/>
    <property type="gene ID" value="ENSG00000144057.16"/>
</dbReference>
<dbReference type="Ensembl" id="ENST00000409087.3">
    <molecule id="Q96JF0-2"/>
    <property type="protein sequence ID" value="ENSP00000387332.3"/>
    <property type="gene ID" value="ENSG00000144057.16"/>
</dbReference>
<dbReference type="Ensembl" id="ENST00000409382.8">
    <molecule id="Q96JF0-1"/>
    <property type="protein sequence ID" value="ENSP00000386942.3"/>
    <property type="gene ID" value="ENSG00000144057.16"/>
</dbReference>
<dbReference type="GeneID" id="84620"/>
<dbReference type="KEGG" id="hsa:84620"/>
<dbReference type="MANE-Select" id="ENST00000409382.8">
    <property type="protein sequence ID" value="ENSP00000386942.3"/>
    <property type="RefSeq nucleotide sequence ID" value="NM_001142351.2"/>
    <property type="RefSeq protein sequence ID" value="NP_001135823.1"/>
</dbReference>
<dbReference type="UCSC" id="uc002tdq.4">
    <molecule id="Q96JF0-1"/>
    <property type="organism name" value="human"/>
</dbReference>
<dbReference type="AGR" id="HGNC:10861"/>
<dbReference type="CTD" id="84620"/>
<dbReference type="DisGeNET" id="84620"/>
<dbReference type="GeneCards" id="ST6GAL2"/>
<dbReference type="HGNC" id="HGNC:10861">
    <property type="gene designation" value="ST6GAL2"/>
</dbReference>
<dbReference type="HPA" id="ENSG00000144057">
    <property type="expression patterns" value="Tissue enhanced (brain, thyroid gland)"/>
</dbReference>
<dbReference type="MIM" id="608472">
    <property type="type" value="gene"/>
</dbReference>
<dbReference type="neXtProt" id="NX_Q96JF0"/>
<dbReference type="OpenTargets" id="ENSG00000144057"/>
<dbReference type="PharmGKB" id="PA35763"/>
<dbReference type="VEuPathDB" id="HostDB:ENSG00000144057"/>
<dbReference type="eggNOG" id="KOG2692">
    <property type="taxonomic scope" value="Eukaryota"/>
</dbReference>
<dbReference type="GeneTree" id="ENSGT00940000158714"/>
<dbReference type="HOGENOM" id="CLU_038334_1_0_1"/>
<dbReference type="InParanoid" id="Q96JF0"/>
<dbReference type="OMA" id="IMGAMHE"/>
<dbReference type="OrthoDB" id="10264956at2759"/>
<dbReference type="PAN-GO" id="Q96JF0">
    <property type="GO annotations" value="3 GO annotations based on evolutionary models"/>
</dbReference>
<dbReference type="PhylomeDB" id="Q96JF0"/>
<dbReference type="TreeFam" id="TF323961"/>
<dbReference type="BRENDA" id="2.4.99.1">
    <property type="organism ID" value="2681"/>
</dbReference>
<dbReference type="PathwayCommons" id="Q96JF0"/>
<dbReference type="Reactome" id="R-HSA-4085001">
    <property type="pathway name" value="Sialic acid metabolism"/>
</dbReference>
<dbReference type="SignaLink" id="Q96JF0"/>
<dbReference type="BioGRID-ORCS" id="84620">
    <property type="hits" value="7 hits in 1140 CRISPR screens"/>
</dbReference>
<dbReference type="ChiTaRS" id="ST6GAL2">
    <property type="organism name" value="human"/>
</dbReference>
<dbReference type="GenomeRNAi" id="84620"/>
<dbReference type="Pharos" id="Q96JF0">
    <property type="development level" value="Tbio"/>
</dbReference>
<dbReference type="PRO" id="PR:Q96JF0"/>
<dbReference type="Proteomes" id="UP000005640">
    <property type="component" value="Chromosome 2"/>
</dbReference>
<dbReference type="RNAct" id="Q96JF0">
    <property type="molecule type" value="protein"/>
</dbReference>
<dbReference type="Bgee" id="ENSG00000144057">
    <property type="expression patterns" value="Expressed in cortical plate and 129 other cell types or tissues"/>
</dbReference>
<dbReference type="ExpressionAtlas" id="Q96JF0">
    <property type="expression patterns" value="baseline and differential"/>
</dbReference>
<dbReference type="GO" id="GO:0005794">
    <property type="term" value="C:Golgi apparatus"/>
    <property type="evidence" value="ECO:0000318"/>
    <property type="project" value="GO_Central"/>
</dbReference>
<dbReference type="GO" id="GO:0032580">
    <property type="term" value="C:Golgi cisterna membrane"/>
    <property type="evidence" value="ECO:0007669"/>
    <property type="project" value="UniProtKB-SubCell"/>
</dbReference>
<dbReference type="GO" id="GO:0000139">
    <property type="term" value="C:Golgi membrane"/>
    <property type="evidence" value="ECO:0000304"/>
    <property type="project" value="Reactome"/>
</dbReference>
<dbReference type="GO" id="GO:0003835">
    <property type="term" value="F:beta-galactoside alpha-2,6-sialyltransferase activity"/>
    <property type="evidence" value="ECO:0000314"/>
    <property type="project" value="UniProtKB"/>
</dbReference>
<dbReference type="GO" id="GO:0009311">
    <property type="term" value="P:oligosaccharide metabolic process"/>
    <property type="evidence" value="ECO:0000314"/>
    <property type="project" value="UniProtKB"/>
</dbReference>
<dbReference type="GO" id="GO:0006486">
    <property type="term" value="P:protein glycosylation"/>
    <property type="evidence" value="ECO:0007669"/>
    <property type="project" value="InterPro"/>
</dbReference>
<dbReference type="GO" id="GO:0097503">
    <property type="term" value="P:sialylation"/>
    <property type="evidence" value="ECO:0000318"/>
    <property type="project" value="GO_Central"/>
</dbReference>
<dbReference type="CDD" id="cd23986">
    <property type="entry name" value="GT29_ST6GAL2"/>
    <property type="match status" value="1"/>
</dbReference>
<dbReference type="FunFam" id="3.90.1480.20:FF:000010">
    <property type="entry name" value="ST6 beta-galactoside alpha-2,6-sialyltransferase 2"/>
    <property type="match status" value="1"/>
</dbReference>
<dbReference type="Gene3D" id="3.90.1480.20">
    <property type="entry name" value="Glycosyl transferase family 29"/>
    <property type="match status" value="1"/>
</dbReference>
<dbReference type="InterPro" id="IPR011330">
    <property type="entry name" value="Glyco_hydro/deAcase_b/a-brl"/>
</dbReference>
<dbReference type="InterPro" id="IPR001675">
    <property type="entry name" value="Glyco_trans_29"/>
</dbReference>
<dbReference type="InterPro" id="IPR038578">
    <property type="entry name" value="GT29-like_sf"/>
</dbReference>
<dbReference type="PANTHER" id="PTHR46059">
    <property type="entry name" value="BETA-GALACTOSIDE ALPHA-2,6-SIALYLTRANSFERASE"/>
    <property type="match status" value="1"/>
</dbReference>
<dbReference type="PANTHER" id="PTHR46059:SF3">
    <property type="entry name" value="BETA-GALACTOSIDE ALPHA-2,6-SIALYLTRANSFERASE 2"/>
    <property type="match status" value="1"/>
</dbReference>
<dbReference type="Pfam" id="PF00777">
    <property type="entry name" value="Glyco_transf_29"/>
    <property type="match status" value="1"/>
</dbReference>
<dbReference type="SUPFAM" id="SSF88713">
    <property type="entry name" value="Glycoside hydrolase/deacetylase"/>
    <property type="match status" value="1"/>
</dbReference>
<feature type="chain" id="PRO_0000314785" description="Beta-galactoside alpha-2,6-sialyltransferase 2">
    <location>
        <begin position="1"/>
        <end position="529"/>
    </location>
</feature>
<feature type="topological domain" description="Cytoplasmic" evidence="2">
    <location>
        <begin position="1"/>
        <end position="11"/>
    </location>
</feature>
<feature type="transmembrane region" description="Helical; Signal-anchor for type II membrane protein" evidence="2">
    <location>
        <begin position="12"/>
        <end position="32"/>
    </location>
</feature>
<feature type="topological domain" description="Lumenal" evidence="2">
    <location>
        <begin position="33"/>
        <end position="529"/>
    </location>
</feature>
<feature type="glycosylation site" description="O-linked (GalNAc...) serine" evidence="7">
    <location>
        <position position="69"/>
    </location>
</feature>
<feature type="glycosylation site" description="N-linked (GlcNAc...) asparagine" evidence="2">
    <location>
        <position position="211"/>
    </location>
</feature>
<feature type="disulfide bond" evidence="1">
    <location>
        <begin position="253"/>
        <end position="519"/>
    </location>
</feature>
<feature type="disulfide bond" evidence="1">
    <location>
        <begin position="296"/>
        <end position="448"/>
    </location>
</feature>
<feature type="disulfide bond" evidence="1">
    <location>
        <begin position="466"/>
        <end position="477"/>
    </location>
</feature>
<feature type="splice variant" id="VSP_030356" description="In isoform 2." evidence="8">
    <original>ILIMMSMCREVHVYEYIPSVRQTELCHYHELYYDAACTLGAYHPLLYEKLLVQRLNMGTQGDLHRKGKVVLPGFQAVHCPAPSPVIPHS</original>
    <variation>SFVKIGHIRACSEPRSRDCTPAWTTE</variation>
    <location>
        <begin position="441"/>
        <end position="529"/>
    </location>
</feature>
<feature type="sequence variant" id="VAR_038046" description="In dbSNP:rs3796110.">
    <original>G</original>
    <variation>R</variation>
    <location>
        <position position="154"/>
    </location>
</feature>
<feature type="sequence variant" id="VAR_038047" description="In dbSNP:rs12615112.">
    <original>I</original>
    <variation>V</variation>
    <location>
        <position position="341"/>
    </location>
</feature>
<organism>
    <name type="scientific">Homo sapiens</name>
    <name type="common">Human</name>
    <dbReference type="NCBI Taxonomy" id="9606"/>
    <lineage>
        <taxon>Eukaryota</taxon>
        <taxon>Metazoa</taxon>
        <taxon>Chordata</taxon>
        <taxon>Craniata</taxon>
        <taxon>Vertebrata</taxon>
        <taxon>Euteleostomi</taxon>
        <taxon>Mammalia</taxon>
        <taxon>Eutheria</taxon>
        <taxon>Euarchontoglires</taxon>
        <taxon>Primates</taxon>
        <taxon>Haplorrhini</taxon>
        <taxon>Catarrhini</taxon>
        <taxon>Hominidae</taxon>
        <taxon>Homo</taxon>
    </lineage>
</organism>
<proteinExistence type="evidence at protein level"/>
<comment type="function">
    <text evidence="3">Transfers sialic acid from the donor of substrate CMP-sialic acid to galactose containing acceptor substrates. Has alpha-2,6-sialyltransferase activity toward oligosaccharides that have the Gal-beta-1,4-GlcNAc sequence at the non-reducing end of their carbohydrate groups, but it has weak or no activities toward glycoproteins and glycolipids.</text>
</comment>
<comment type="catalytic activity">
    <reaction evidence="3 4 5">
        <text>a beta-D-galactoside + CMP-N-acetyl-beta-neuraminate = an N-acetyl-alpha-neuraminyl-(2-&gt;6)-beta-D-galactosyl derivative + CMP + H(+)</text>
        <dbReference type="Rhea" id="RHEA:52104"/>
        <dbReference type="ChEBI" id="CHEBI:15378"/>
        <dbReference type="ChEBI" id="CHEBI:28034"/>
        <dbReference type="ChEBI" id="CHEBI:57812"/>
        <dbReference type="ChEBI" id="CHEBI:60377"/>
        <dbReference type="ChEBI" id="CHEBI:136398"/>
        <dbReference type="EC" id="2.4.3.1"/>
    </reaction>
</comment>
<comment type="biophysicochemical properties">
    <kinetics>
        <KM evidence="3 4">0.74 mM for Gal-beta-1,4-GlcNAc-beta-O-octyl</KM>
        <KM evidence="3 4">0.71 mM for Gal-beta-1,4-GlcNAc</KM>
        <KM evidence="3 4">0.48 mM for lacto-N-neotetraose</KM>
    </kinetics>
</comment>
<comment type="interaction">
    <interactant intactId="EBI-12908338">
        <id>Q96JF0-2</id>
    </interactant>
    <interactant intactId="EBI-13059134">
        <id>Q13520</id>
        <label>AQP6</label>
    </interactant>
    <organismsDiffer>false</organismsDiffer>
    <experiments>3</experiments>
</comment>
<comment type="interaction">
    <interactant intactId="EBI-12908338">
        <id>Q96JF0-2</id>
    </interactant>
    <interactant intactId="EBI-6657396">
        <id>P19397</id>
        <label>CD53</label>
    </interactant>
    <organismsDiffer>false</organismsDiffer>
    <experiments>3</experiments>
</comment>
<comment type="interaction">
    <interactant intactId="EBI-12908338">
        <id>Q96JF0-2</id>
    </interactant>
    <interactant intactId="EBI-12142257">
        <id>Q8TBE3</id>
        <label>FNDC9</label>
    </interactant>
    <organismsDiffer>false</organismsDiffer>
    <experiments>3</experiments>
</comment>
<comment type="interaction">
    <interactant intactId="EBI-12908338">
        <id>Q96JF0-2</id>
    </interactant>
    <interactant intactId="EBI-12372489">
        <id>Q8TF64</id>
        <label>GIPC3</label>
    </interactant>
    <organismsDiffer>false</organismsDiffer>
    <experiments>3</experiments>
</comment>
<comment type="interaction">
    <interactant intactId="EBI-12908338">
        <id>Q96JF0-2</id>
    </interactant>
    <interactant intactId="EBI-712073">
        <id>Q8NBJ4</id>
        <label>GOLM1</label>
    </interactant>
    <organismsDiffer>false</organismsDiffer>
    <experiments>3</experiments>
</comment>
<comment type="interaction">
    <interactant intactId="EBI-12908338">
        <id>Q96JF0-2</id>
    </interactant>
    <interactant intactId="EBI-11721746">
        <id>Q8TED1</id>
        <label>GPX8</label>
    </interactant>
    <organismsDiffer>false</organismsDiffer>
    <experiments>3</experiments>
</comment>
<comment type="interaction">
    <interactant intactId="EBI-12908338">
        <id>Q96JF0-2</id>
    </interactant>
    <interactant intactId="EBI-18053395">
        <id>Q7Z5P4</id>
        <label>HSD17B13</label>
    </interactant>
    <organismsDiffer>false</organismsDiffer>
    <experiments>3</experiments>
</comment>
<comment type="interaction">
    <interactant intactId="EBI-12908338">
        <id>Q96JF0-2</id>
    </interactant>
    <interactant intactId="EBI-1050125">
        <id>O15173</id>
        <label>PGRMC2</label>
    </interactant>
    <organismsDiffer>false</organismsDiffer>
    <experiments>3</experiments>
</comment>
<comment type="interaction">
    <interactant intactId="EBI-12908338">
        <id>Q96JF0-2</id>
    </interactant>
    <interactant intactId="EBI-12908340">
        <id>Q9H2B4-2</id>
        <label>SLC26A1</label>
    </interactant>
    <organismsDiffer>false</organismsDiffer>
    <experiments>3</experiments>
</comment>
<comment type="interaction">
    <interactant intactId="EBI-12908338">
        <id>Q96JF0-2</id>
    </interactant>
    <interactant intactId="EBI-12898013">
        <id>Q9NP94</id>
        <label>SLC39A2</label>
    </interactant>
    <organismsDiffer>false</organismsDiffer>
    <experiments>3</experiments>
</comment>
<comment type="interaction">
    <interactant intactId="EBI-12908338">
        <id>Q96JF0-2</id>
    </interactant>
    <interactant intactId="EBI-4289564">
        <id>P30825</id>
        <label>SLC7A1</label>
    </interactant>
    <organismsDiffer>false</organismsDiffer>
    <experiments>3</experiments>
</comment>
<comment type="interaction">
    <interactant intactId="EBI-12908338">
        <id>Q96JF0-2</id>
    </interactant>
    <interactant intactId="EBI-6268651">
        <id>Q9NPL8</id>
        <label>TIMMDC1</label>
    </interactant>
    <organismsDiffer>false</organismsDiffer>
    <experiments>3</experiments>
</comment>
<comment type="interaction">
    <interactant intactId="EBI-12908338">
        <id>Q96JF0-2</id>
    </interactant>
    <interactant intactId="EBI-8638294">
        <id>Q9NUH8</id>
        <label>TMEM14B</label>
    </interactant>
    <organismsDiffer>false</organismsDiffer>
    <experiments>3</experiments>
</comment>
<comment type="interaction">
    <interactant intactId="EBI-12908338">
        <id>Q96JF0-2</id>
    </interactant>
    <interactant intactId="EBI-10982110">
        <id>Q96Q45-2</id>
        <label>TMEM237</label>
    </interactant>
    <organismsDiffer>false</organismsDiffer>
    <experiments>3</experiments>
</comment>
<comment type="subcellular location">
    <subcellularLocation>
        <location evidence="1">Golgi apparatus</location>
        <location evidence="1">Golgi stack membrane</location>
        <topology evidence="1">Single-pass type II membrane protein</topology>
    </subcellularLocation>
</comment>
<comment type="alternative products">
    <event type="alternative splicing"/>
    <isoform>
        <id>Q96JF0-1</id>
        <name>1</name>
        <sequence type="displayed"/>
    </isoform>
    <isoform>
        <id>Q96JF0-2</id>
        <name>2</name>
        <sequence type="described" ref="VSP_030356"/>
    </isoform>
</comment>
<comment type="tissue specificity">
    <text evidence="3 4">Weakly expressed in some tissues, such as small intestine, colon and fetal brain.</text>
</comment>
<comment type="induction">
    <text evidence="6">By IL6/interleukin-6 and IL8//interleukin-8.</text>
</comment>
<comment type="PTM">
    <text evidence="7">O-glycosylated.</text>
</comment>
<comment type="similarity">
    <text evidence="9">Belongs to the glycosyltransferase 29 family.</text>
</comment>
<comment type="sequence caution" evidence="9">
    <conflict type="erroneous initiation">
        <sequence resource="EMBL-CDS" id="AAH08680"/>
    </conflict>
    <text>Truncated N-terminus.</text>
</comment>
<comment type="sequence caution" evidence="9">
    <conflict type="erroneous initiation">
        <sequence resource="EMBL-CDS" id="BAB47506"/>
    </conflict>
    <text>Extended N-terminus.</text>
</comment>
<protein>
    <recommendedName>
        <fullName>Beta-galactoside alpha-2,6-sialyltransferase 2</fullName>
        <shortName>Alpha 2,6-ST 2</shortName>
        <ecNumber evidence="3 4 5">2.4.3.1</ecNumber>
    </recommendedName>
    <alternativeName>
        <fullName>CMP-N-acetylneuraminate-beta-galactosamide-alpha-2,6-sialyltransferase 2</fullName>
    </alternativeName>
    <alternativeName>
        <fullName>ST6Gal II</fullName>
        <shortName>ST6GalII</shortName>
        <shortName>hST6Gal II</shortName>
    </alternativeName>
    <alternativeName>
        <fullName>Sialyltransferase 2</fullName>
    </alternativeName>
</protein>
<evidence type="ECO:0000250" key="1"/>
<evidence type="ECO:0000255" key="2"/>
<evidence type="ECO:0000269" key="3">
    <source>
    </source>
</evidence>
<evidence type="ECO:0000269" key="4">
    <source>
    </source>
</evidence>
<evidence type="ECO:0000269" key="5">
    <source>
    </source>
</evidence>
<evidence type="ECO:0000269" key="6">
    <source>
    </source>
</evidence>
<evidence type="ECO:0000269" key="7">
    <source>
    </source>
</evidence>
<evidence type="ECO:0000303" key="8">
    <source>
    </source>
</evidence>
<evidence type="ECO:0000305" key="9"/>
<name>SIAT2_HUMAN</name>
<accession>Q96JF0</accession>
<accession>D3DVK3</accession>
<accession>Q53QP4</accession>
<accession>Q86Y44</accession>
<accession>Q8IUG7</accession>
<accession>Q96HE4</accession>
<reference key="1">
    <citation type="journal article" date="2002" name="J. Biol. Chem.">
        <title>Characterization of the second type of human beta-galactoside alpha2,6-sialyltransferase (ST6Gal II) that sialylates Galbeta1,4GlcNAc structures on oligosaccharides preferentially.</title>
        <authorList>
            <person name="Takashima S."/>
            <person name="Tsuji S."/>
            <person name="Tsujimoto M."/>
        </authorList>
    </citation>
    <scope>NUCLEOTIDE SEQUENCE [MRNA] (ISOFORM 1)</scope>
    <scope>FUNCTION</scope>
    <scope>CATALYTIC ACTIVITY</scope>
    <scope>BIOPHYSICOCHEMICAL PROPERTIES</scope>
    <scope>TISSUE SPECIFICITY</scope>
</reference>
<reference key="2">
    <citation type="journal article" date="2001" name="DNA Res.">
        <title>Prediction of the coding sequences of unidentified human genes. XX. The complete sequences of 100 new cDNA clones from brain which code for large proteins in vitro.</title>
        <authorList>
            <person name="Nagase T."/>
            <person name="Nakayama M."/>
            <person name="Nakajima D."/>
            <person name="Kikuno R."/>
            <person name="Ohara O."/>
        </authorList>
    </citation>
    <scope>NUCLEOTIDE SEQUENCE [LARGE SCALE MRNA] (ISOFORM 1)</scope>
    <source>
        <tissue>Brain</tissue>
    </source>
</reference>
<reference key="3">
    <citation type="journal article" date="2005" name="Nature">
        <title>Generation and annotation of the DNA sequences of human chromosomes 2 and 4.</title>
        <authorList>
            <person name="Hillier L.W."/>
            <person name="Graves T.A."/>
            <person name="Fulton R.S."/>
            <person name="Fulton L.A."/>
            <person name="Pepin K.H."/>
            <person name="Minx P."/>
            <person name="Wagner-McPherson C."/>
            <person name="Layman D."/>
            <person name="Wylie K."/>
            <person name="Sekhon M."/>
            <person name="Becker M.C."/>
            <person name="Fewell G.A."/>
            <person name="Delehaunty K.D."/>
            <person name="Miner T.L."/>
            <person name="Nash W.E."/>
            <person name="Kremitzki C."/>
            <person name="Oddy L."/>
            <person name="Du H."/>
            <person name="Sun H."/>
            <person name="Bradshaw-Cordum H."/>
            <person name="Ali J."/>
            <person name="Carter J."/>
            <person name="Cordes M."/>
            <person name="Harris A."/>
            <person name="Isak A."/>
            <person name="van Brunt A."/>
            <person name="Nguyen C."/>
            <person name="Du F."/>
            <person name="Courtney L."/>
            <person name="Kalicki J."/>
            <person name="Ozersky P."/>
            <person name="Abbott S."/>
            <person name="Armstrong J."/>
            <person name="Belter E.A."/>
            <person name="Caruso L."/>
            <person name="Cedroni M."/>
            <person name="Cotton M."/>
            <person name="Davidson T."/>
            <person name="Desai A."/>
            <person name="Elliott G."/>
            <person name="Erb T."/>
            <person name="Fronick C."/>
            <person name="Gaige T."/>
            <person name="Haakenson W."/>
            <person name="Haglund K."/>
            <person name="Holmes A."/>
            <person name="Harkins R."/>
            <person name="Kim K."/>
            <person name="Kruchowski S.S."/>
            <person name="Strong C.M."/>
            <person name="Grewal N."/>
            <person name="Goyea E."/>
            <person name="Hou S."/>
            <person name="Levy A."/>
            <person name="Martinka S."/>
            <person name="Mead K."/>
            <person name="McLellan M.D."/>
            <person name="Meyer R."/>
            <person name="Randall-Maher J."/>
            <person name="Tomlinson C."/>
            <person name="Dauphin-Kohlberg S."/>
            <person name="Kozlowicz-Reilly A."/>
            <person name="Shah N."/>
            <person name="Swearengen-Shahid S."/>
            <person name="Snider J."/>
            <person name="Strong J.T."/>
            <person name="Thompson J."/>
            <person name="Yoakum M."/>
            <person name="Leonard S."/>
            <person name="Pearman C."/>
            <person name="Trani L."/>
            <person name="Radionenko M."/>
            <person name="Waligorski J.E."/>
            <person name="Wang C."/>
            <person name="Rock S.M."/>
            <person name="Tin-Wollam A.-M."/>
            <person name="Maupin R."/>
            <person name="Latreille P."/>
            <person name="Wendl M.C."/>
            <person name="Yang S.-P."/>
            <person name="Pohl C."/>
            <person name="Wallis J.W."/>
            <person name="Spieth J."/>
            <person name="Bieri T.A."/>
            <person name="Berkowicz N."/>
            <person name="Nelson J.O."/>
            <person name="Osborne J."/>
            <person name="Ding L."/>
            <person name="Meyer R."/>
            <person name="Sabo A."/>
            <person name="Shotland Y."/>
            <person name="Sinha P."/>
            <person name="Wohldmann P.E."/>
            <person name="Cook L.L."/>
            <person name="Hickenbotham M.T."/>
            <person name="Eldred J."/>
            <person name="Williams D."/>
            <person name="Jones T.A."/>
            <person name="She X."/>
            <person name="Ciccarelli F.D."/>
            <person name="Izaurralde E."/>
            <person name="Taylor J."/>
            <person name="Schmutz J."/>
            <person name="Myers R.M."/>
            <person name="Cox D.R."/>
            <person name="Huang X."/>
            <person name="McPherson J.D."/>
            <person name="Mardis E.R."/>
            <person name="Clifton S.W."/>
            <person name="Warren W.C."/>
            <person name="Chinwalla A.T."/>
            <person name="Eddy S.R."/>
            <person name="Marra M.A."/>
            <person name="Ovcharenko I."/>
            <person name="Furey T.S."/>
            <person name="Miller W."/>
            <person name="Eichler E.E."/>
            <person name="Bork P."/>
            <person name="Suyama M."/>
            <person name="Torrents D."/>
            <person name="Waterston R.H."/>
            <person name="Wilson R.K."/>
        </authorList>
    </citation>
    <scope>NUCLEOTIDE SEQUENCE [LARGE SCALE GENOMIC DNA]</scope>
</reference>
<reference key="4">
    <citation type="submission" date="2005-09" db="EMBL/GenBank/DDBJ databases">
        <authorList>
            <person name="Mural R.J."/>
            <person name="Istrail S."/>
            <person name="Sutton G.G."/>
            <person name="Florea L."/>
            <person name="Halpern A.L."/>
            <person name="Mobarry C.M."/>
            <person name="Lippert R."/>
            <person name="Walenz B."/>
            <person name="Shatkay H."/>
            <person name="Dew I."/>
            <person name="Miller J.R."/>
            <person name="Flanigan M.J."/>
            <person name="Edwards N.J."/>
            <person name="Bolanos R."/>
            <person name="Fasulo D."/>
            <person name="Halldorsson B.V."/>
            <person name="Hannenhalli S."/>
            <person name="Turner R."/>
            <person name="Yooseph S."/>
            <person name="Lu F."/>
            <person name="Nusskern D.R."/>
            <person name="Shue B.C."/>
            <person name="Zheng X.H."/>
            <person name="Zhong F."/>
            <person name="Delcher A.L."/>
            <person name="Huson D.H."/>
            <person name="Kravitz S.A."/>
            <person name="Mouchard L."/>
            <person name="Reinert K."/>
            <person name="Remington K.A."/>
            <person name="Clark A.G."/>
            <person name="Waterman M.S."/>
            <person name="Eichler E.E."/>
            <person name="Adams M.D."/>
            <person name="Hunkapiller M.W."/>
            <person name="Myers E.W."/>
            <person name="Venter J.C."/>
        </authorList>
    </citation>
    <scope>NUCLEOTIDE SEQUENCE [LARGE SCALE GENOMIC DNA]</scope>
</reference>
<reference key="5">
    <citation type="journal article" date="2004" name="Genome Res.">
        <title>The status, quality, and expansion of the NIH full-length cDNA project: the Mammalian Gene Collection (MGC).</title>
        <authorList>
            <consortium name="The MGC Project Team"/>
        </authorList>
    </citation>
    <scope>NUCLEOTIDE SEQUENCE [LARGE SCALE MRNA] (ISOFORM 2)</scope>
    <source>
        <tissue>Ovary</tissue>
    </source>
</reference>
<reference key="6">
    <citation type="journal article" date="2003" name="Eur. J. Biochem.">
        <title>Identification and functional expression of a second human beta-galactoside alpha2,6-sialyltransferase, ST6Gal II.</title>
        <authorList>
            <person name="Krzewinski-Recchi M.-A."/>
            <person name="Julien S."/>
            <person name="Juliant S."/>
            <person name="Teintenier-Lelievre M."/>
            <person name="Samyn-Petit B."/>
            <person name="Montiel M.-D."/>
            <person name="Mir A.-M."/>
            <person name="Cerutti M."/>
            <person name="Harduin-Lepers A."/>
            <person name="Delannoy P."/>
        </authorList>
    </citation>
    <scope>NUCLEOTIDE SEQUENCE [MRNA] OF 315-529 (ISOFORM 1)</scope>
    <scope>CATALYTIC ACTIVITY</scope>
    <scope>BIOPHYSICOCHEMICAL PROPERTIES</scope>
    <scope>TISSUE SPECIFICITY</scope>
</reference>
<reference key="7">
    <citation type="journal article" date="2006" name="Biochim. Biophys. Acta">
        <title>Probing the substrate specificity of four different sialyltransferases using synthetic beta-D-Galp-(1--&gt;4)-beta-D-GlcpNAc-(1--&gt;2)-alpha-D-Manp-(1--&gt;O) (CH(2))7CH3 analogues general activating effect of replacing N-acetylglucosamine by N-propionylglucosamine.</title>
        <authorList>
            <person name="Rohfritsch P.F."/>
            <person name="Joosten J.A.F."/>
            <person name="Krzewinski-Recchi M.-A."/>
            <person name="Harduin-Lepers A."/>
            <person name="Laporte B."/>
            <person name="Juliant S."/>
            <person name="Cerutti M."/>
            <person name="Delannoy P."/>
            <person name="Vliegenthart J.F.G."/>
            <person name="Kamerling J.P."/>
        </authorList>
    </citation>
    <scope>ENZYME ACTIVITY</scope>
</reference>
<reference key="8">
    <citation type="journal article" date="2008" name="Biochem. J.">
        <title>IL-6 and IL-8 increase the expression of glycosyltransferases and sulfotransferases involved in the biosynthesis of sialylated and/or sulfated Lewis x epitopes in the human bronchial mucosa.</title>
        <authorList>
            <person name="Groux-Degroote S."/>
            <person name="Krzewinski-Recchi M.-A."/>
            <person name="Cazet A."/>
            <person name="Vincent A."/>
            <person name="Lehoux S."/>
            <person name="Lafitte J.-J."/>
            <person name="van Seuningen I."/>
            <person name="Delannoy P."/>
        </authorList>
    </citation>
    <scope>INDUCTION</scope>
</reference>
<reference key="9">
    <citation type="journal article" date="2013" name="J. Proteome Res.">
        <title>LC-MS/MS characterization of O-glycosylation sites and glycan structures of human cerebrospinal fluid glycoproteins.</title>
        <authorList>
            <person name="Halim A."/>
            <person name="Ruetschi U."/>
            <person name="Larson G."/>
            <person name="Nilsson J."/>
        </authorList>
    </citation>
    <scope>GLYCOSYLATION AT SER-69</scope>
    <scope>IDENTIFICATION BY MASS SPECTROMETRY</scope>
</reference>
<sequence>MKPHLKQWRQRMLFGIFAWGLLFLLIFIYFTDSNPAEPVPSSLSFLETRRLLPVQGKQRAIMGAAHEPSPPGGLDARQALPRAHPAGSFHAGPGDLQKWAQSQDGFEHKEFFSSQVGRKSQSAFYPEDDDYFFAAGQPGWHSHTQGTLGFPSPGEPGPREGAFPAAQVQRRRVKKRHRRQRRSHVLEEGDDGDRLYSSMSRAFLYRLWKGNVSSKMLNPRLQKAMKDYLTANKHGVRFRGKREAGLSRAQLLCQLRSRARVRTLDGTEAPFSALGWRRLVPAVPLSQLHPRGLRSCAVVMSAGAILNSSLGEEIDSHDAVLRFNSAPTRGYEKDVGNKTTIRIINSQILTNPSHHFIDSSLYKDVILVAWDPAPYSANLNLWYKKPDYNLFTPYIQHRQRNPNQPFYILHPKFIWQLWDIIQENTKEKIQPNPPSSGFIGILIMMSMCREVHVYEYIPSVRQTELCHYHELYYDAACTLGAYHPLLYEKLLVQRLNMGTQGDLHRKGKVVLPGFQAVHCPAPSPVIPHS</sequence>